<accession>Q28641</accession>
<accession>G1TKS9</accession>
<proteinExistence type="evidence at protein level"/>
<organism>
    <name type="scientific">Oryctolagus cuniculus</name>
    <name type="common">Rabbit</name>
    <dbReference type="NCBI Taxonomy" id="9986"/>
    <lineage>
        <taxon>Eukaryota</taxon>
        <taxon>Metazoa</taxon>
        <taxon>Chordata</taxon>
        <taxon>Craniata</taxon>
        <taxon>Vertebrata</taxon>
        <taxon>Euteleostomi</taxon>
        <taxon>Mammalia</taxon>
        <taxon>Eutheria</taxon>
        <taxon>Euarchontoglires</taxon>
        <taxon>Glires</taxon>
        <taxon>Lagomorpha</taxon>
        <taxon>Leporidae</taxon>
        <taxon>Oryctolagus</taxon>
    </lineage>
</organism>
<evidence type="ECO:0000250" key="1"/>
<evidence type="ECO:0000250" key="2">
    <source>
        <dbReference type="UniProtKB" id="Q29RW1"/>
    </source>
</evidence>
<evidence type="ECO:0000255" key="3"/>
<evidence type="ECO:0000255" key="4">
    <source>
        <dbReference type="PROSITE-ProRule" id="PRU00116"/>
    </source>
</evidence>
<evidence type="ECO:0000255" key="5">
    <source>
        <dbReference type="PROSITE-ProRule" id="PRU00782"/>
    </source>
</evidence>
<evidence type="ECO:0000255" key="6">
    <source>
        <dbReference type="PROSITE-ProRule" id="PRU01190"/>
    </source>
</evidence>
<evidence type="ECO:0000269" key="7">
    <source>
    </source>
</evidence>
<evidence type="ECO:0000305" key="8"/>
<evidence type="ECO:0000312" key="9">
    <source>
        <dbReference type="Proteomes" id="UP000001811"/>
    </source>
</evidence>
<evidence type="ECO:0007829" key="10">
    <source>
        <dbReference type="PDB" id="6YSY"/>
    </source>
</evidence>
<gene>
    <name type="primary">MYH4</name>
</gene>
<name>MYH4_RABIT</name>
<protein>
    <recommendedName>
        <fullName>Myosin-4</fullName>
    </recommendedName>
    <alternativeName>
        <fullName>Myosin heavy chain 2b</fullName>
        <shortName>MyHC-2b</shortName>
    </alternativeName>
    <alternativeName>
        <fullName>Myosin heavy chain 4</fullName>
    </alternativeName>
    <alternativeName>
        <fullName>Myosin heavy chain, skeletal muscle, juvenile</fullName>
    </alternativeName>
</protein>
<comment type="function">
    <text>Muscle contraction.</text>
</comment>
<comment type="subunit">
    <text>Muscle myosin is a hexameric protein that consists of 2 heavy chain subunits (MHC), 2 alkali light chain subunits (MLC) and 2 regulatory light chain subunits (MLC-2).</text>
</comment>
<comment type="subcellular location">
    <subcellularLocation>
        <location>Cytoplasm</location>
        <location>Myofibril</location>
    </subcellularLocation>
    <text>Thick filaments of the myofibrils.</text>
</comment>
<comment type="domain">
    <text>The rodlike tail sequence is highly repetitive, showing cycles of a 28-residue repeat pattern composed of 4 heptapeptides, characteristic for alpha-helical coiled coils.</text>
</comment>
<comment type="domain">
    <text evidence="8">Limited proteolysis of myosin heavy chain produces 1 light meromyosin (LMM) and 1 heavy meromyosin (HMM). HMM can be further cleaved into 2 globular subfragments (S1) and 1 rod-shaped subfragment (S2).</text>
</comment>
<comment type="similarity">
    <text evidence="5">Belongs to the TRAFAC class myosin-kinesin ATPase superfamily. Myosin family.</text>
</comment>
<comment type="caution">
    <text evidence="8">Represents a conventional myosin. This protein should not be confused with the unconventional myosin-4 (MYO4).</text>
</comment>
<keyword id="KW-0002">3D-structure</keyword>
<keyword id="KW-0009">Actin-binding</keyword>
<keyword id="KW-0067">ATP-binding</keyword>
<keyword id="KW-0112">Calmodulin-binding</keyword>
<keyword id="KW-0175">Coiled coil</keyword>
<keyword id="KW-0963">Cytoplasm</keyword>
<keyword id="KW-0903">Direct protein sequencing</keyword>
<keyword id="KW-0488">Methylation</keyword>
<keyword id="KW-0505">Motor protein</keyword>
<keyword id="KW-0514">Muscle protein</keyword>
<keyword id="KW-0518">Myosin</keyword>
<keyword id="KW-0547">Nucleotide-binding</keyword>
<keyword id="KW-0597">Phosphoprotein</keyword>
<keyword id="KW-1185">Reference proteome</keyword>
<keyword id="KW-0787">Thick filament</keyword>
<reference key="1">
    <citation type="submission" date="1995-08" db="EMBL/GenBank/DDBJ databases">
        <title>Isolation, sequencing of myosin heavy chain cDNA from rabbit skeletal muscle and a novel cosynthesis of S-1 fragment with the essential and regulatory light chains.</title>
        <authorList>
            <person name="Maeda K."/>
            <person name="Hostinova E."/>
            <person name="Roesch-Kleinkauf A."/>
            <person name="Schuster H."/>
            <person name="Gasperik J."/>
            <person name="Wittinghofer A."/>
        </authorList>
    </citation>
    <scope>NUCLEOTIDE SEQUENCE [MRNA]</scope>
    <source>
        <strain>New Zealand white</strain>
        <tissue>Skeletal muscle</tissue>
    </source>
</reference>
<reference evidence="9" key="2">
    <citation type="journal article" date="2011" name="Nature">
        <title>A high-resolution map of human evolutionary constraint using 29 mammals.</title>
        <authorList>
            <person name="Lindblad-Toh K."/>
            <person name="Garber M."/>
            <person name="Zuk O."/>
            <person name="Lin M.F."/>
            <person name="Parker B.J."/>
            <person name="Washietl S."/>
            <person name="Kheradpour P."/>
            <person name="Ernst J."/>
            <person name="Jordan G."/>
            <person name="Mauceli E."/>
            <person name="Ward L.D."/>
            <person name="Lowe C.B."/>
            <person name="Holloway A.K."/>
            <person name="Clamp M."/>
            <person name="Gnerre S."/>
            <person name="Alfoldi J."/>
            <person name="Beal K."/>
            <person name="Chang J."/>
            <person name="Clawson H."/>
            <person name="Cuff J."/>
            <person name="Di Palma F."/>
            <person name="Fitzgerald S."/>
            <person name="Flicek P."/>
            <person name="Guttman M."/>
            <person name="Hubisz M.J."/>
            <person name="Jaffe D.B."/>
            <person name="Jungreis I."/>
            <person name="Kent W.J."/>
            <person name="Kostka D."/>
            <person name="Lara M."/>
            <person name="Martins A.L."/>
            <person name="Massingham T."/>
            <person name="Moltke I."/>
            <person name="Raney B.J."/>
            <person name="Rasmussen M.D."/>
            <person name="Robinson J."/>
            <person name="Stark A."/>
            <person name="Vilella A.J."/>
            <person name="Wen J."/>
            <person name="Xie X."/>
            <person name="Zody M.C."/>
            <person name="Baldwin J."/>
            <person name="Bloom T."/>
            <person name="Chin C.W."/>
            <person name="Heiman D."/>
            <person name="Nicol R."/>
            <person name="Nusbaum C."/>
            <person name="Young S."/>
            <person name="Wilkinson J."/>
            <person name="Worley K.C."/>
            <person name="Kovar C.L."/>
            <person name="Muzny D.M."/>
            <person name="Gibbs R.A."/>
            <person name="Cree A."/>
            <person name="Dihn H.H."/>
            <person name="Fowler G."/>
            <person name="Jhangiani S."/>
            <person name="Joshi V."/>
            <person name="Lee S."/>
            <person name="Lewis L.R."/>
            <person name="Nazareth L.V."/>
            <person name="Okwuonu G."/>
            <person name="Santibanez J."/>
            <person name="Warren W.C."/>
            <person name="Mardis E.R."/>
            <person name="Weinstock G.M."/>
            <person name="Wilson R.K."/>
            <person name="Delehaunty K."/>
            <person name="Dooling D."/>
            <person name="Fronik C."/>
            <person name="Fulton L."/>
            <person name="Fulton B."/>
            <person name="Graves T."/>
            <person name="Minx P."/>
            <person name="Sodergren E."/>
            <person name="Birney E."/>
            <person name="Margulies E.H."/>
            <person name="Herrero J."/>
            <person name="Green E.D."/>
            <person name="Haussler D."/>
            <person name="Siepel A."/>
            <person name="Goldman N."/>
            <person name="Pollard K.S."/>
            <person name="Pedersen J.S."/>
            <person name="Lander E.S."/>
            <person name="Kellis M."/>
        </authorList>
    </citation>
    <scope>NUCLEOTIDE SEQUENCE [LARGE SCALE GENOMIC DNA]</scope>
    <source>
        <strain evidence="9">Thorbecke</strain>
    </source>
</reference>
<reference key="3">
    <citation type="journal article" date="1971" name="Biochemistry">
        <title>Amino acid sequence around the single 3-methylhistidine residue in rabbit skeletal muscle myosin.</title>
        <authorList>
            <person name="Huszar G."/>
            <person name="Elzinga M."/>
        </authorList>
    </citation>
    <scope>PROTEIN SEQUENCE OF 748-760</scope>
    <scope>METHYLATION AT HIS-756</scope>
    <source>
        <tissue>Skeletal muscle</tissue>
    </source>
</reference>
<feature type="chain" id="PRO_0000123400" description="Myosin-4">
    <location>
        <begin position="1"/>
        <end position="1938"/>
    </location>
</feature>
<feature type="domain" description="Myosin N-terminal SH3-like" evidence="6">
    <location>
        <begin position="33"/>
        <end position="82"/>
    </location>
</feature>
<feature type="domain" description="Myosin motor" evidence="5">
    <location>
        <begin position="86"/>
        <end position="781"/>
    </location>
</feature>
<feature type="domain" description="IQ" evidence="4">
    <location>
        <begin position="784"/>
        <end position="813"/>
    </location>
</feature>
<feature type="region of interest" description="Actin-binding" evidence="5">
    <location>
        <begin position="658"/>
        <end position="680"/>
    </location>
</feature>
<feature type="region of interest" description="Actin-binding" evidence="1">
    <location>
        <begin position="760"/>
        <end position="774"/>
    </location>
</feature>
<feature type="coiled-coil region" evidence="3">
    <location>
        <begin position="845"/>
        <end position="1926"/>
    </location>
</feature>
<feature type="binding site" evidence="5">
    <location>
        <begin position="179"/>
        <end position="186"/>
    </location>
    <ligand>
        <name>ATP</name>
        <dbReference type="ChEBI" id="CHEBI:30616"/>
    </ligand>
</feature>
<feature type="modified residue" description="Phosphoserine" evidence="2">
    <location>
        <position position="36"/>
    </location>
</feature>
<feature type="modified residue" description="Phosphothreonine" evidence="2">
    <location>
        <position position="64"/>
    </location>
</feature>
<feature type="modified residue" description="Phosphothreonine" evidence="2">
    <location>
        <position position="69"/>
    </location>
</feature>
<feature type="modified residue" description="Phosphotyrosine" evidence="2">
    <location>
        <position position="389"/>
    </location>
</feature>
<feature type="modified residue" description="Phosphoserine" evidence="2">
    <location>
        <position position="392"/>
    </location>
</feature>
<feature type="modified residue" description="Phosphothreonine" evidence="2">
    <location>
        <position position="419"/>
    </location>
</feature>
<feature type="modified residue" description="Phosphotyrosine" evidence="2">
    <location>
        <position position="424"/>
    </location>
</feature>
<feature type="modified residue" description="Pros-methylhistidine" evidence="7">
    <location>
        <position position="756"/>
    </location>
</feature>
<feature type="modified residue" description="Phosphoserine" evidence="2">
    <location>
        <position position="1091"/>
    </location>
</feature>
<feature type="modified residue" description="Phosphoserine" evidence="2">
    <location>
        <position position="1095"/>
    </location>
</feature>
<feature type="modified residue" description="Phosphoserine" evidence="2">
    <location>
        <position position="1161"/>
    </location>
</feature>
<feature type="modified residue" description="Phosphoserine" evidence="2">
    <location>
        <position position="1236"/>
    </location>
</feature>
<feature type="modified residue" description="Phosphothreonine" evidence="2">
    <location>
        <position position="1240"/>
    </location>
</feature>
<feature type="modified residue" description="Phosphoserine" evidence="2">
    <location>
        <position position="1242"/>
    </location>
</feature>
<feature type="modified residue" description="Phosphothreonine" evidence="2">
    <location>
        <position position="1254"/>
    </location>
</feature>
<feature type="modified residue" description="Phosphoserine" evidence="2">
    <location>
        <position position="1260"/>
    </location>
</feature>
<feature type="modified residue" description="Phosphothreonine" evidence="2">
    <location>
        <position position="1264"/>
    </location>
</feature>
<feature type="modified residue" description="Phosphoserine" evidence="2">
    <location>
        <position position="1277"/>
    </location>
</feature>
<feature type="modified residue" description="Phosphothreonine" evidence="2">
    <location>
        <position position="1285"/>
    </location>
</feature>
<feature type="modified residue" description="Phosphoserine" evidence="2">
    <location>
        <position position="1287"/>
    </location>
</feature>
<feature type="modified residue" description="Phosphoserine" evidence="2">
    <location>
        <position position="1291"/>
    </location>
</feature>
<feature type="modified residue" description="Phosphoserine" evidence="2">
    <location>
        <position position="1302"/>
    </location>
</feature>
<feature type="modified residue" description="Phosphoserine" evidence="2">
    <location>
        <position position="1305"/>
    </location>
</feature>
<feature type="modified residue" description="Phosphotyrosine" evidence="2">
    <location>
        <position position="1463"/>
    </location>
</feature>
<feature type="modified residue" description="Phosphothreonine" evidence="2">
    <location>
        <position position="1466"/>
    </location>
</feature>
<feature type="modified residue" description="Phosphoserine" evidence="2">
    <location>
        <position position="1473"/>
    </location>
</feature>
<feature type="modified residue" description="Phosphotyrosine" evidence="2">
    <location>
        <position position="1491"/>
    </location>
</feature>
<feature type="modified residue" description="Phosphoserine" evidence="2">
    <location>
        <position position="1494"/>
    </location>
</feature>
<feature type="modified residue" description="Phosphothreonine" evidence="2">
    <location>
        <position position="1500"/>
    </location>
</feature>
<feature type="modified residue" description="Phosphoserine" evidence="2">
    <location>
        <position position="1513"/>
    </location>
</feature>
<feature type="modified residue" description="Phosphothreonine" evidence="2">
    <location>
        <position position="1516"/>
    </location>
</feature>
<feature type="modified residue" description="Phosphoserine" evidence="2">
    <location>
        <position position="1541"/>
    </location>
</feature>
<feature type="modified residue" description="Phosphoserine" evidence="2">
    <location>
        <position position="1553"/>
    </location>
</feature>
<feature type="modified residue" description="Phosphoserine" evidence="2">
    <location>
        <position position="1573"/>
    </location>
</feature>
<feature type="modified residue" description="Phosphoserine" evidence="2">
    <location>
        <position position="1599"/>
    </location>
</feature>
<feature type="modified residue" description="Phosphoserine" evidence="2">
    <location>
        <position position="1602"/>
    </location>
</feature>
<feature type="modified residue" description="Phosphoserine" evidence="2">
    <location>
        <position position="1713"/>
    </location>
</feature>
<feature type="modified residue" description="Phosphoserine" evidence="2">
    <location>
        <position position="1725"/>
    </location>
</feature>
<feature type="modified residue" description="Phosphothreonine" evidence="2">
    <location>
        <position position="1729"/>
    </location>
</feature>
<feature type="modified residue" description="Phosphothreonine" evidence="2">
    <location>
        <position position="1735"/>
    </location>
</feature>
<feature type="modified residue" description="Phosphoserine" evidence="2">
    <location>
        <position position="1738"/>
    </location>
</feature>
<feature type="sequence conflict" description="In Ref. 1; AAA74199." evidence="8" ref="1">
    <original>SS</original>
    <variation>RK</variation>
    <location>
        <begin position="2"/>
        <end position="3"/>
    </location>
</feature>
<feature type="sequence conflict" description="In Ref. 1; AAA74199." evidence="8" ref="1">
    <original>G</original>
    <variation>A</variation>
    <location>
        <position position="234"/>
    </location>
</feature>
<feature type="sequence conflict" description="In Ref. 1; AAA74199." evidence="8" ref="1">
    <original>G</original>
    <variation>R</variation>
    <location>
        <position position="574"/>
    </location>
</feature>
<feature type="sequence conflict" description="In Ref. 1; AAA74199." evidence="8" ref="1">
    <original>STH</original>
    <variation>THS</variation>
    <location>
        <begin position="667"/>
        <end position="669"/>
    </location>
</feature>
<feature type="sequence conflict" description="In Ref. 1; AAA74199." evidence="8" ref="1">
    <original>C</original>
    <variation>S</variation>
    <location>
        <position position="675"/>
    </location>
</feature>
<feature type="sequence conflict" description="In Ref. 3; AA sequence." evidence="8" ref="3">
    <original>TQ</original>
    <variation>QT</variation>
    <location>
        <begin position="757"/>
        <end position="758"/>
    </location>
</feature>
<feature type="sequence conflict" description="In Ref. 1; AAA74199." evidence="8" ref="1">
    <original>R</original>
    <variation>E</variation>
    <location>
        <position position="873"/>
    </location>
</feature>
<feature type="sequence conflict" description="In Ref. 1; AAA74199." evidence="8" ref="1">
    <original>L</original>
    <variation>V</variation>
    <location>
        <position position="1484"/>
    </location>
</feature>
<feature type="sequence conflict" description="In Ref. 1; AAA74199." evidence="8" ref="1">
    <original>SNV</original>
    <variation>CNI</variation>
    <location>
        <begin position="1892"/>
        <end position="1894"/>
    </location>
</feature>
<feature type="helix" evidence="10">
    <location>
        <begin position="6"/>
        <end position="13"/>
    </location>
</feature>
<feature type="helix" evidence="10">
    <location>
        <begin position="14"/>
        <end position="17"/>
    </location>
</feature>
<feature type="helix" evidence="10">
    <location>
        <begin position="21"/>
        <end position="28"/>
    </location>
</feature>
<feature type="turn" evidence="10">
    <location>
        <begin position="34"/>
        <end position="36"/>
    </location>
</feature>
<feature type="strand" evidence="10">
    <location>
        <begin position="37"/>
        <end position="42"/>
    </location>
</feature>
<feature type="turn" evidence="10">
    <location>
        <begin position="43"/>
        <end position="45"/>
    </location>
</feature>
<feature type="strand" evidence="10">
    <location>
        <begin position="46"/>
        <end position="56"/>
    </location>
</feature>
<feature type="strand" evidence="10">
    <location>
        <begin position="59"/>
        <end position="64"/>
    </location>
</feature>
<feature type="strand" evidence="10">
    <location>
        <begin position="69"/>
        <end position="73"/>
    </location>
</feature>
<feature type="helix" evidence="10">
    <location>
        <begin position="74"/>
        <end position="76"/>
    </location>
</feature>
<feature type="strand" evidence="10">
    <location>
        <begin position="77"/>
        <end position="79"/>
    </location>
</feature>
<feature type="helix" evidence="10">
    <location>
        <begin position="83"/>
        <end position="85"/>
    </location>
</feature>
<feature type="helix" evidence="10">
    <location>
        <begin position="91"/>
        <end position="93"/>
    </location>
</feature>
<feature type="helix" evidence="10">
    <location>
        <begin position="99"/>
        <end position="111"/>
    </location>
</feature>
<feature type="strand" evidence="10">
    <location>
        <begin position="116"/>
        <end position="119"/>
    </location>
</feature>
<feature type="strand" evidence="10">
    <location>
        <begin position="122"/>
        <end position="126"/>
    </location>
</feature>
<feature type="helix" evidence="10">
    <location>
        <begin position="137"/>
        <end position="143"/>
    </location>
</feature>
<feature type="turn" evidence="10">
    <location>
        <begin position="148"/>
        <end position="150"/>
    </location>
</feature>
<feature type="helix" evidence="10">
    <location>
        <begin position="155"/>
        <end position="169"/>
    </location>
</feature>
<feature type="strand" evidence="10">
    <location>
        <begin position="173"/>
        <end position="178"/>
    </location>
</feature>
<feature type="helix" evidence="10">
    <location>
        <begin position="185"/>
        <end position="198"/>
    </location>
</feature>
<feature type="helix" evidence="10">
    <location>
        <begin position="219"/>
        <end position="234"/>
    </location>
</feature>
<feature type="strand" evidence="10">
    <location>
        <begin position="249"/>
        <end position="255"/>
    </location>
</feature>
<feature type="strand" evidence="10">
    <location>
        <begin position="261"/>
        <end position="268"/>
    </location>
</feature>
<feature type="helix" evidence="10">
    <location>
        <begin position="273"/>
        <end position="276"/>
    </location>
</feature>
<feature type="helix" evidence="10">
    <location>
        <begin position="287"/>
        <end position="293"/>
    </location>
</feature>
<feature type="helix" evidence="10">
    <location>
        <begin position="298"/>
        <end position="304"/>
    </location>
</feature>
<feature type="helix" evidence="10">
    <location>
        <begin position="310"/>
        <end position="312"/>
    </location>
</feature>
<feature type="turn" evidence="10">
    <location>
        <begin position="314"/>
        <end position="316"/>
    </location>
</feature>
<feature type="helix" evidence="10">
    <location>
        <begin position="328"/>
        <end position="342"/>
    </location>
</feature>
<feature type="helix" evidence="10">
    <location>
        <begin position="346"/>
        <end position="362"/>
    </location>
</feature>
<feature type="strand" evidence="10">
    <location>
        <begin position="367"/>
        <end position="369"/>
    </location>
</feature>
<feature type="strand" evidence="10">
    <location>
        <begin position="373"/>
        <end position="379"/>
    </location>
</feature>
<feature type="helix" evidence="10">
    <location>
        <begin position="382"/>
        <end position="390"/>
    </location>
</feature>
<feature type="helix" evidence="10">
    <location>
        <begin position="395"/>
        <end position="403"/>
    </location>
</feature>
<feature type="strand" evidence="10">
    <location>
        <begin position="406"/>
        <end position="410"/>
    </location>
</feature>
<feature type="helix" evidence="10">
    <location>
        <begin position="420"/>
        <end position="450"/>
    </location>
</feature>
<feature type="strand" evidence="10">
    <location>
        <begin position="458"/>
        <end position="464"/>
    </location>
</feature>
<feature type="strand" evidence="10">
    <location>
        <begin position="472"/>
        <end position="474"/>
    </location>
</feature>
<feature type="helix" evidence="10">
    <location>
        <begin position="476"/>
        <end position="497"/>
    </location>
</feature>
<feature type="helix" evidence="10">
    <location>
        <begin position="499"/>
        <end position="506"/>
    </location>
</feature>
<feature type="helix" evidence="10">
    <location>
        <begin position="521"/>
        <end position="528"/>
    </location>
</feature>
<feature type="helix" evidence="10">
    <location>
        <begin position="533"/>
        <end position="541"/>
    </location>
</feature>
<feature type="helix" evidence="10">
    <location>
        <begin position="548"/>
        <end position="559"/>
    </location>
</feature>
<feature type="turn" evidence="10">
    <location>
        <begin position="560"/>
        <end position="562"/>
    </location>
</feature>
<feature type="strand" evidence="10">
    <location>
        <begin position="579"/>
        <end position="584"/>
    </location>
</feature>
<feature type="strand" evidence="10">
    <location>
        <begin position="587"/>
        <end position="591"/>
    </location>
</feature>
<feature type="helix" evidence="10">
    <location>
        <begin position="596"/>
        <end position="599"/>
    </location>
</feature>
<feature type="helix" evidence="10">
    <location>
        <begin position="606"/>
        <end position="613"/>
    </location>
</feature>
<feature type="helix" evidence="10">
    <location>
        <begin position="618"/>
        <end position="623"/>
    </location>
</feature>
<feature type="helix" evidence="10">
    <location>
        <begin position="650"/>
        <end position="666"/>
    </location>
</feature>
<feature type="strand" evidence="10">
    <location>
        <begin position="668"/>
        <end position="676"/>
    </location>
</feature>
<feature type="helix" evidence="10">
    <location>
        <begin position="689"/>
        <end position="699"/>
    </location>
</feature>
<feature type="helix" evidence="10">
    <location>
        <begin position="701"/>
        <end position="710"/>
    </location>
</feature>
<feature type="strand" evidence="10">
    <location>
        <begin position="714"/>
        <end position="717"/>
    </location>
</feature>
<feature type="helix" evidence="10">
    <location>
        <begin position="718"/>
        <end position="725"/>
    </location>
</feature>
<feature type="helix" evidence="10">
    <location>
        <begin position="726"/>
        <end position="732"/>
    </location>
</feature>
<feature type="helix" evidence="10">
    <location>
        <begin position="741"/>
        <end position="749"/>
    </location>
</feature>
<feature type="strand" evidence="10">
    <location>
        <begin position="752"/>
        <end position="754"/>
    </location>
</feature>
<feature type="strand" evidence="10">
    <location>
        <begin position="758"/>
        <end position="761"/>
    </location>
</feature>
<feature type="strand" evidence="10">
    <location>
        <begin position="763"/>
        <end position="768"/>
    </location>
</feature>
<feature type="helix" evidence="10">
    <location>
        <begin position="772"/>
        <end position="808"/>
    </location>
</feature>
<dbReference type="EMBL" id="U32574">
    <property type="protein sequence ID" value="AAA74199.1"/>
    <property type="molecule type" value="mRNA"/>
</dbReference>
<dbReference type="EMBL" id="AAGW02049470">
    <property type="status" value="NOT_ANNOTATED_CDS"/>
    <property type="molecule type" value="Genomic_DNA"/>
</dbReference>
<dbReference type="PIR" id="A35557">
    <property type="entry name" value="A35557"/>
</dbReference>
<dbReference type="PIR" id="A59293">
    <property type="entry name" value="A59293"/>
</dbReference>
<dbReference type="RefSeq" id="NP_001103286.1">
    <property type="nucleotide sequence ID" value="NM_001109816.1"/>
</dbReference>
<dbReference type="PDB" id="6YSY">
    <property type="method" value="X-ray"/>
    <property type="resolution" value="3.25 A"/>
    <property type="chains" value="A=1-1938"/>
</dbReference>
<dbReference type="PDBsum" id="6YSY"/>
<dbReference type="SMR" id="Q28641"/>
<dbReference type="FunCoup" id="Q28641">
    <property type="interactions" value="46"/>
</dbReference>
<dbReference type="STRING" id="9986.ENSOCUP00000017571"/>
<dbReference type="BindingDB" id="Q28641"/>
<dbReference type="ChEMBL" id="CHEMBL4295837"/>
<dbReference type="PaxDb" id="9986-ENSOCUP00000017571"/>
<dbReference type="ABCD" id="Q28641">
    <property type="antibodies" value="1 sequenced antibody"/>
</dbReference>
<dbReference type="Ensembl" id="ENSOCUT00000022103.2">
    <property type="protein sequence ID" value="ENSOCUP00000017571.2"/>
    <property type="gene ID" value="ENSOCUG00000026636.3"/>
</dbReference>
<dbReference type="GeneID" id="100125991"/>
<dbReference type="KEGG" id="ocu:100125991"/>
<dbReference type="CTD" id="4619"/>
<dbReference type="eggNOG" id="KOG0161">
    <property type="taxonomic scope" value="Eukaryota"/>
</dbReference>
<dbReference type="GeneTree" id="ENSGT00940000154760"/>
<dbReference type="HOGENOM" id="CLU_000192_8_0_1"/>
<dbReference type="InParanoid" id="Q28641"/>
<dbReference type="OrthoDB" id="312459at2759"/>
<dbReference type="TreeFam" id="TF314375"/>
<dbReference type="Proteomes" id="UP000001811">
    <property type="component" value="Chromosome 19"/>
</dbReference>
<dbReference type="Bgee" id="ENSOCUG00000026636">
    <property type="expression patterns" value="Expressed in skeletal muscle tissue and 13 other cell types or tissues"/>
</dbReference>
<dbReference type="GO" id="GO:0031672">
    <property type="term" value="C:A band"/>
    <property type="evidence" value="ECO:0007669"/>
    <property type="project" value="Ensembl"/>
</dbReference>
<dbReference type="GO" id="GO:0036464">
    <property type="term" value="C:cytoplasmic ribonucleoprotein granule"/>
    <property type="evidence" value="ECO:0007669"/>
    <property type="project" value="Ensembl"/>
</dbReference>
<dbReference type="GO" id="GO:0014704">
    <property type="term" value="C:intercalated disc"/>
    <property type="evidence" value="ECO:0007669"/>
    <property type="project" value="Ensembl"/>
</dbReference>
<dbReference type="GO" id="GO:0005859">
    <property type="term" value="C:muscle myosin complex"/>
    <property type="evidence" value="ECO:0007669"/>
    <property type="project" value="Ensembl"/>
</dbReference>
<dbReference type="GO" id="GO:0032982">
    <property type="term" value="C:myosin filament"/>
    <property type="evidence" value="ECO:0007669"/>
    <property type="project" value="UniProtKB-KW"/>
</dbReference>
<dbReference type="GO" id="GO:0051015">
    <property type="term" value="F:actin filament binding"/>
    <property type="evidence" value="ECO:0007669"/>
    <property type="project" value="InterPro"/>
</dbReference>
<dbReference type="GO" id="GO:0005524">
    <property type="term" value="F:ATP binding"/>
    <property type="evidence" value="ECO:0007669"/>
    <property type="project" value="UniProtKB-KW"/>
</dbReference>
<dbReference type="GO" id="GO:0005516">
    <property type="term" value="F:calmodulin binding"/>
    <property type="evidence" value="ECO:0007669"/>
    <property type="project" value="UniProtKB-KW"/>
</dbReference>
<dbReference type="GO" id="GO:0000146">
    <property type="term" value="F:microfilament motor activity"/>
    <property type="evidence" value="ECO:0007669"/>
    <property type="project" value="TreeGrafter"/>
</dbReference>
<dbReference type="GO" id="GO:0006936">
    <property type="term" value="P:muscle contraction"/>
    <property type="evidence" value="ECO:0007669"/>
    <property type="project" value="TreeGrafter"/>
</dbReference>
<dbReference type="CDD" id="cd14910">
    <property type="entry name" value="MYSc_Myh1_mammals"/>
    <property type="match status" value="1"/>
</dbReference>
<dbReference type="FunFam" id="1.10.10.820:FF:000001">
    <property type="entry name" value="Myosin heavy chain"/>
    <property type="match status" value="1"/>
</dbReference>
<dbReference type="FunFam" id="1.20.5.340:FF:000002">
    <property type="entry name" value="Myosin heavy chain"/>
    <property type="match status" value="1"/>
</dbReference>
<dbReference type="FunFam" id="1.20.5.340:FF:000003">
    <property type="entry name" value="Myosin heavy chain"/>
    <property type="match status" value="1"/>
</dbReference>
<dbReference type="FunFam" id="1.20.5.340:FF:000004">
    <property type="entry name" value="Myosin heavy chain"/>
    <property type="match status" value="1"/>
</dbReference>
<dbReference type="FunFam" id="1.20.5.340:FF:000006">
    <property type="entry name" value="Myosin heavy chain"/>
    <property type="match status" value="1"/>
</dbReference>
<dbReference type="FunFam" id="1.20.5.340:FF:000013">
    <property type="entry name" value="Myosin heavy chain"/>
    <property type="match status" value="1"/>
</dbReference>
<dbReference type="FunFam" id="1.20.5.370:FF:000001">
    <property type="entry name" value="Myosin heavy chain"/>
    <property type="match status" value="1"/>
</dbReference>
<dbReference type="FunFam" id="1.20.5.370:FF:000002">
    <property type="entry name" value="Myosin heavy chain"/>
    <property type="match status" value="1"/>
</dbReference>
<dbReference type="FunFam" id="1.20.5.370:FF:000003">
    <property type="entry name" value="Myosin heavy chain"/>
    <property type="match status" value="1"/>
</dbReference>
<dbReference type="FunFam" id="1.20.5.370:FF:000007">
    <property type="entry name" value="Myosin heavy chain"/>
    <property type="match status" value="1"/>
</dbReference>
<dbReference type="FunFam" id="1.20.5.370:FF:000008">
    <property type="entry name" value="Myosin heavy chain"/>
    <property type="match status" value="1"/>
</dbReference>
<dbReference type="FunFam" id="1.20.5.4820:FF:000001">
    <property type="entry name" value="Myosin heavy chain"/>
    <property type="match status" value="1"/>
</dbReference>
<dbReference type="FunFam" id="1.20.58.530:FF:000001">
    <property type="entry name" value="Myosin heavy chain"/>
    <property type="match status" value="1"/>
</dbReference>
<dbReference type="FunFam" id="2.30.30.360:FF:000001">
    <property type="entry name" value="Myosin heavy chain"/>
    <property type="match status" value="1"/>
</dbReference>
<dbReference type="FunFam" id="3.40.850.10:FF:000024">
    <property type="entry name" value="Myosin heavy chain, isoform J"/>
    <property type="match status" value="1"/>
</dbReference>
<dbReference type="FunFam" id="1.20.120.720:FF:000001">
    <property type="entry name" value="Myosin heavy chain, muscle"/>
    <property type="match status" value="1"/>
</dbReference>
<dbReference type="Gene3D" id="1.10.10.820">
    <property type="match status" value="1"/>
</dbReference>
<dbReference type="Gene3D" id="1.20.5.340">
    <property type="match status" value="5"/>
</dbReference>
<dbReference type="Gene3D" id="1.20.5.370">
    <property type="match status" value="4"/>
</dbReference>
<dbReference type="Gene3D" id="1.20.5.4820">
    <property type="match status" value="1"/>
</dbReference>
<dbReference type="Gene3D" id="1.20.58.530">
    <property type="match status" value="1"/>
</dbReference>
<dbReference type="Gene3D" id="6.10.250.2420">
    <property type="match status" value="1"/>
</dbReference>
<dbReference type="Gene3D" id="3.40.850.10">
    <property type="entry name" value="Kinesin motor domain"/>
    <property type="match status" value="1"/>
</dbReference>
<dbReference type="Gene3D" id="2.30.30.360">
    <property type="entry name" value="Myosin S1 fragment, N-terminal"/>
    <property type="match status" value="1"/>
</dbReference>
<dbReference type="Gene3D" id="1.20.120.720">
    <property type="entry name" value="Myosin VI head, motor domain, U50 subdomain"/>
    <property type="match status" value="1"/>
</dbReference>
<dbReference type="InterPro" id="IPR000048">
    <property type="entry name" value="IQ_motif_EF-hand-BS"/>
</dbReference>
<dbReference type="InterPro" id="IPR036961">
    <property type="entry name" value="Kinesin_motor_dom_sf"/>
</dbReference>
<dbReference type="InterPro" id="IPR001609">
    <property type="entry name" value="Myosin_head_motor_dom-like"/>
</dbReference>
<dbReference type="InterPro" id="IPR004009">
    <property type="entry name" value="Myosin_N"/>
</dbReference>
<dbReference type="InterPro" id="IPR008989">
    <property type="entry name" value="Myosin_S1_N"/>
</dbReference>
<dbReference type="InterPro" id="IPR002928">
    <property type="entry name" value="Myosin_tail"/>
</dbReference>
<dbReference type="InterPro" id="IPR027417">
    <property type="entry name" value="P-loop_NTPase"/>
</dbReference>
<dbReference type="InterPro" id="IPR014751">
    <property type="entry name" value="XRCC4-like_C"/>
</dbReference>
<dbReference type="PANTHER" id="PTHR45615">
    <property type="entry name" value="MYOSIN HEAVY CHAIN, NON-MUSCLE"/>
    <property type="match status" value="1"/>
</dbReference>
<dbReference type="PANTHER" id="PTHR45615:SF2">
    <property type="entry name" value="MYOSIN-1"/>
    <property type="match status" value="1"/>
</dbReference>
<dbReference type="Pfam" id="PF00063">
    <property type="entry name" value="Myosin_head"/>
    <property type="match status" value="1"/>
</dbReference>
<dbReference type="Pfam" id="PF02736">
    <property type="entry name" value="Myosin_N"/>
    <property type="match status" value="1"/>
</dbReference>
<dbReference type="Pfam" id="PF01576">
    <property type="entry name" value="Myosin_tail_1"/>
    <property type="match status" value="1"/>
</dbReference>
<dbReference type="PRINTS" id="PR00193">
    <property type="entry name" value="MYOSINHEAVY"/>
</dbReference>
<dbReference type="SMART" id="SM00015">
    <property type="entry name" value="IQ"/>
    <property type="match status" value="2"/>
</dbReference>
<dbReference type="SMART" id="SM00242">
    <property type="entry name" value="MYSc"/>
    <property type="match status" value="1"/>
</dbReference>
<dbReference type="SUPFAM" id="SSF90257">
    <property type="entry name" value="Myosin rod fragments"/>
    <property type="match status" value="5"/>
</dbReference>
<dbReference type="SUPFAM" id="SSF52540">
    <property type="entry name" value="P-loop containing nucleoside triphosphate hydrolases"/>
    <property type="match status" value="1"/>
</dbReference>
<dbReference type="SUPFAM" id="SSF57997">
    <property type="entry name" value="Tropomyosin"/>
    <property type="match status" value="1"/>
</dbReference>
<dbReference type="PROSITE" id="PS50096">
    <property type="entry name" value="IQ"/>
    <property type="match status" value="1"/>
</dbReference>
<dbReference type="PROSITE" id="PS51456">
    <property type="entry name" value="MYOSIN_MOTOR"/>
    <property type="match status" value="1"/>
</dbReference>
<dbReference type="PROSITE" id="PS51844">
    <property type="entry name" value="SH3_LIKE"/>
    <property type="match status" value="1"/>
</dbReference>
<sequence length="1938" mass="222876">MSSDADMAIFGEAAPYLRKSEKERIEAQNKPFDAKSSVFVADPKESFVKATVQSREGGKVTAKTEAGATVTVKEDQVFPMNPPKYDKIEDMAMMTHLHEPAVLYNLKERYAAWMIYTYSGLFCVTVNPYKWLPVYNAEVVTAYRGKKRQEAPPHIFSISDNAYQFMLTDRENQSILITGESGAGKTVNTKRVIQYFATIAVTGDKKKEEATSGKMQGTLEDQIISANPLLEAFGNAKTVRNDNSSRFGKFIRIHFGTTGKLASADIETYLLEKSRVTFQLKAERSYHIFYQIMSNKKPDLIEMLLITTNPYDYAFVSQGEITVPSIDDQEELMATDSAIDILGFTSDERVSIYKLTGAVMHYGNMKFKQKQREEQAEPDGTEVADKAAYLQSLNSADLLKALCYPRVKVGNEYVTKGQTVQQVYNAVGALAKAVYEKMFLWMVTRINQQLDTKQPRQYFIGVLDIAGFEIFDFNSLEQLCINFTNEKLQQFFNHHMFVLEQEEYKKEGIEWEFIDFGMDLAACIELIEKPMGIFSILEEECMFPKATDTSFKNKLYEQHLGKSNNFQKPKPAKGKVEAHFSLVHYAGTVDYNITGWLDKNKDPLNETVVGLYQKSAMKTLAFLFTGTAAAEAEGGGKKGGKKKGSSFQTVSALFRENLNKLMTNLRSTHPHFVRCIIPNETKTPGAMEHELVLHQLRCNGVLEGIRICRKGFPSRILYADFKQRYKVLNASAIPEGQFIDSKKASEKLLGSIDVDHTQYKFGHTKVFFKAGLLGLLEEMRDDKLAQLITRTQAMCRGFLARVEYKKMVERRESIFCIQYNIRAFMNVKHWPWMKLYFKIKPLLKSAETEKEMANMKEEFEKTKESLAKAEAKRKELEEKMVALMQEKNDLQLQVQAEADSLADAEERCDQLIKTKIQLEAKIKEVTERAEDEEEINAELTAKKRKLEDECSELKKDIDDLELTLAKVEKEKHATENKVKNLTEEMAGLDETIAKLTKEKKALQEAHQQTLDDLQAEEDKVNTLTKAKTKLEQQVDDLEGSLEQEKKIRMDLERAKRKLEGDLKLAQESTMDIENDKQQLDEKLKKKEFEMSNLQSKIEDEQALAMQLQKKIKELQARIEELEEEIEAERASRAKAEKQRSDLSRELEEISERLEEAGGATSAQIEMNKKREAEFQKMRRDLEEATLQHEATAATLRKKHADSVAELGEQIDNLQRVKQKLEKEKSELKMEIDDLASNMETVSKAKGNLEKMCRTLEDQVSELKTKEEEHQRLINDLSAQRARLQTESGEFSRQLDEKDSLVSQLSRGKQAFTQQIEELKRQLEEEIKAKSALAHALQSARHDCDLLREQYEEEQEAKAELQRAMSKANSEVAQWRTKYETDAIQRTEELEEAKKKLAQRLQDAEEHVEAVNAKCASLEKTKQRLQNEVEDLMIDVERTNAACAALDKKQRNFDKILAEWKHKYEETHAELEASQKESRSLSTELFKVKNAYEESLDQLETLKRENKNLQQEISDLTEQIAEGGKRIHELEKVKKQVEQEKSELQAALEEAEASLEHEEGKILRIQLELNQVKSEIDRKIAEKDEEIDQLKRNHIRVVESMQSTLDAEIRSRNDAIRIKKKMEGDLNEMEIQLNHANRMAAEALRNYRNTQGILKDTQLHLDDALRGQEDLKEQLAMVERRANLLQAEIEELRATLEQTERSRKVAEQELLDASERVQLLHTQNTSLINTKKKLETDISQIQGEMEDIVQEARNAEEKAKKAITDAAMMAEELKKEQDTSAHLERMKKNMEQTVKDLQHRLDEAEQLALKGGKKQIQKLEARVRELEAEVESEQKRNVEAVKGLRKHERRVKELTYQTEEDRKNVLRLQDLVDKLQAKVKSYKRQAEEAEEQSNVNLSKFRKLQHELEEAEERADIAESQVNKLRVKSREVHTKVISEE</sequence>